<comment type="function">
    <text evidence="1">E2-like enzyme which forms an intermediate with UFM1 via a thioester linkage.</text>
</comment>
<comment type="similarity">
    <text evidence="2">Belongs to the ubiquitin-conjugating enzyme family. UFC1 subfamily.</text>
</comment>
<name>UFC1_ARATH</name>
<gene>
    <name type="ordered locus">At1g27530</name>
    <name type="ORF">T17H3.3</name>
</gene>
<feature type="chain" id="PRO_0000391980" description="Ubiquitin-fold modifier-conjugating enzyme 1">
    <location>
        <begin position="1"/>
        <end position="174"/>
    </location>
</feature>
<feature type="active site" description="Glycyl thioester intermediate" evidence="1">
    <location>
        <position position="119"/>
    </location>
</feature>
<feature type="sequence conflict" description="In Ref. 3; AAN65067." evidence="2" ref="3">
    <original>A</original>
    <variation>V</variation>
    <location>
        <position position="169"/>
    </location>
</feature>
<protein>
    <recommendedName>
        <fullName>Ubiquitin-fold modifier-conjugating enzyme 1</fullName>
    </recommendedName>
    <alternativeName>
        <fullName>Ufm1-conjugating enzyme 1</fullName>
    </alternativeName>
</protein>
<proteinExistence type="evidence at transcript level"/>
<evidence type="ECO:0000250" key="1"/>
<evidence type="ECO:0000305" key="2"/>
<accession>Q9SXC8</accession>
<accession>Q8H0X8</accession>
<keyword id="KW-1185">Reference proteome</keyword>
<keyword id="KW-0833">Ubl conjugation pathway</keyword>
<dbReference type="EMBL" id="AC005916">
    <property type="protein sequence ID" value="AAD45991.1"/>
    <property type="molecule type" value="Genomic_DNA"/>
</dbReference>
<dbReference type="EMBL" id="CP002684">
    <property type="protein sequence ID" value="AEE30842.1"/>
    <property type="molecule type" value="Genomic_DNA"/>
</dbReference>
<dbReference type="EMBL" id="AY054632">
    <property type="protein sequence ID" value="AAK96823.1"/>
    <property type="molecule type" value="mRNA"/>
</dbReference>
<dbReference type="EMBL" id="BT001180">
    <property type="protein sequence ID" value="AAN65067.1"/>
    <property type="molecule type" value="mRNA"/>
</dbReference>
<dbReference type="EMBL" id="AY085696">
    <property type="protein sequence ID" value="AAM62915.1"/>
    <property type="molecule type" value="mRNA"/>
</dbReference>
<dbReference type="PIR" id="D86400">
    <property type="entry name" value="D86400"/>
</dbReference>
<dbReference type="RefSeq" id="NP_564289.1">
    <property type="nucleotide sequence ID" value="NM_102517.5"/>
</dbReference>
<dbReference type="SMR" id="Q9SXC8"/>
<dbReference type="BioGRID" id="24879">
    <property type="interactions" value="2"/>
</dbReference>
<dbReference type="FunCoup" id="Q9SXC8">
    <property type="interactions" value="3349"/>
</dbReference>
<dbReference type="STRING" id="3702.Q9SXC8"/>
<dbReference type="iPTMnet" id="Q9SXC8"/>
<dbReference type="MetOSite" id="Q9SXC8"/>
<dbReference type="PaxDb" id="3702-AT1G27530.1"/>
<dbReference type="ProteomicsDB" id="233031"/>
<dbReference type="DNASU" id="839644"/>
<dbReference type="EnsemblPlants" id="AT1G27530.1">
    <property type="protein sequence ID" value="AT1G27530.1"/>
    <property type="gene ID" value="AT1G27530"/>
</dbReference>
<dbReference type="GeneID" id="839644"/>
<dbReference type="Gramene" id="AT1G27530.1">
    <property type="protein sequence ID" value="AT1G27530.1"/>
    <property type="gene ID" value="AT1G27530"/>
</dbReference>
<dbReference type="KEGG" id="ath:AT1G27530"/>
<dbReference type="Araport" id="AT1G27530"/>
<dbReference type="TAIR" id="AT1G27530"/>
<dbReference type="eggNOG" id="KOG3357">
    <property type="taxonomic scope" value="Eukaryota"/>
</dbReference>
<dbReference type="HOGENOM" id="CLU_101170_0_0_1"/>
<dbReference type="InParanoid" id="Q9SXC8"/>
<dbReference type="OMA" id="LWQKNVP"/>
<dbReference type="OrthoDB" id="1020909at2759"/>
<dbReference type="PhylomeDB" id="Q9SXC8"/>
<dbReference type="PRO" id="PR:Q9SXC8"/>
<dbReference type="Proteomes" id="UP000006548">
    <property type="component" value="Chromosome 1"/>
</dbReference>
<dbReference type="ExpressionAtlas" id="Q9SXC8">
    <property type="expression patterns" value="baseline and differential"/>
</dbReference>
<dbReference type="GO" id="GO:0061657">
    <property type="term" value="F:UFM1 conjugating enzyme activity"/>
    <property type="evidence" value="ECO:0007669"/>
    <property type="project" value="InterPro"/>
</dbReference>
<dbReference type="GO" id="GO:0071569">
    <property type="term" value="P:protein ufmylation"/>
    <property type="evidence" value="ECO:0007669"/>
    <property type="project" value="InterPro"/>
</dbReference>
<dbReference type="CDD" id="cd11686">
    <property type="entry name" value="UBCc_UFC1"/>
    <property type="match status" value="1"/>
</dbReference>
<dbReference type="FunFam" id="3.10.110.10:FF:000053">
    <property type="entry name" value="Ubiquitin-fold modifier-conjugating enzyme 1"/>
    <property type="match status" value="1"/>
</dbReference>
<dbReference type="Gene3D" id="3.10.110.10">
    <property type="entry name" value="Ubiquitin Conjugating Enzyme"/>
    <property type="match status" value="1"/>
</dbReference>
<dbReference type="InterPro" id="IPR016135">
    <property type="entry name" value="UBQ-conjugating_enzyme/RWD"/>
</dbReference>
<dbReference type="InterPro" id="IPR014806">
    <property type="entry name" value="Ufc1"/>
</dbReference>
<dbReference type="PANTHER" id="PTHR12921">
    <property type="entry name" value="UBIQUITIN-FOLD MODIFIER-CONJUGATING ENZYME 1"/>
    <property type="match status" value="1"/>
</dbReference>
<dbReference type="PANTHER" id="PTHR12921:SF0">
    <property type="entry name" value="UBIQUITIN-FOLD MODIFIER-CONJUGATING ENZYME 1"/>
    <property type="match status" value="1"/>
</dbReference>
<dbReference type="Pfam" id="PF08694">
    <property type="entry name" value="UFC1"/>
    <property type="match status" value="1"/>
</dbReference>
<dbReference type="PIRSF" id="PIRSF008716">
    <property type="entry name" value="DUF1782"/>
    <property type="match status" value="1"/>
</dbReference>
<dbReference type="SUPFAM" id="SSF54495">
    <property type="entry name" value="UBC-like"/>
    <property type="match status" value="1"/>
</dbReference>
<sequence length="174" mass="19611">MEGWDPNTKSTLTRIPLLTTKAGPRDGAAWTQRLKEEYKSLIAYTQMNKSNDNDWFRISASNPEGTRWTGKCWYVHNLLKYEFDLQFDIPITYPATAPELELPEIDGKTQKMYRGGKICLTVHFKPLWAKNCPRFGIAHALCLGLAPWLAAEIPILVDSGAIKHKDDAATSAES</sequence>
<reference key="1">
    <citation type="journal article" date="2000" name="Nature">
        <title>Sequence and analysis of chromosome 1 of the plant Arabidopsis thaliana.</title>
        <authorList>
            <person name="Theologis A."/>
            <person name="Ecker J.R."/>
            <person name="Palm C.J."/>
            <person name="Federspiel N.A."/>
            <person name="Kaul S."/>
            <person name="White O."/>
            <person name="Alonso J."/>
            <person name="Altafi H."/>
            <person name="Araujo R."/>
            <person name="Bowman C.L."/>
            <person name="Brooks S.Y."/>
            <person name="Buehler E."/>
            <person name="Chan A."/>
            <person name="Chao Q."/>
            <person name="Chen H."/>
            <person name="Cheuk R.F."/>
            <person name="Chin C.W."/>
            <person name="Chung M.K."/>
            <person name="Conn L."/>
            <person name="Conway A.B."/>
            <person name="Conway A.R."/>
            <person name="Creasy T.H."/>
            <person name="Dewar K."/>
            <person name="Dunn P."/>
            <person name="Etgu P."/>
            <person name="Feldblyum T.V."/>
            <person name="Feng J.-D."/>
            <person name="Fong B."/>
            <person name="Fujii C.Y."/>
            <person name="Gill J.E."/>
            <person name="Goldsmith A.D."/>
            <person name="Haas B."/>
            <person name="Hansen N.F."/>
            <person name="Hughes B."/>
            <person name="Huizar L."/>
            <person name="Hunter J.L."/>
            <person name="Jenkins J."/>
            <person name="Johnson-Hopson C."/>
            <person name="Khan S."/>
            <person name="Khaykin E."/>
            <person name="Kim C.J."/>
            <person name="Koo H.L."/>
            <person name="Kremenetskaia I."/>
            <person name="Kurtz D.B."/>
            <person name="Kwan A."/>
            <person name="Lam B."/>
            <person name="Langin-Hooper S."/>
            <person name="Lee A."/>
            <person name="Lee J.M."/>
            <person name="Lenz C.A."/>
            <person name="Li J.H."/>
            <person name="Li Y.-P."/>
            <person name="Lin X."/>
            <person name="Liu S.X."/>
            <person name="Liu Z.A."/>
            <person name="Luros J.S."/>
            <person name="Maiti R."/>
            <person name="Marziali A."/>
            <person name="Militscher J."/>
            <person name="Miranda M."/>
            <person name="Nguyen M."/>
            <person name="Nierman W.C."/>
            <person name="Osborne B.I."/>
            <person name="Pai G."/>
            <person name="Peterson J."/>
            <person name="Pham P.K."/>
            <person name="Rizzo M."/>
            <person name="Rooney T."/>
            <person name="Rowley D."/>
            <person name="Sakano H."/>
            <person name="Salzberg S.L."/>
            <person name="Schwartz J.R."/>
            <person name="Shinn P."/>
            <person name="Southwick A.M."/>
            <person name="Sun H."/>
            <person name="Tallon L.J."/>
            <person name="Tambunga G."/>
            <person name="Toriumi M.J."/>
            <person name="Town C.D."/>
            <person name="Utterback T."/>
            <person name="Van Aken S."/>
            <person name="Vaysberg M."/>
            <person name="Vysotskaia V.S."/>
            <person name="Walker M."/>
            <person name="Wu D."/>
            <person name="Yu G."/>
            <person name="Fraser C.M."/>
            <person name="Venter J.C."/>
            <person name="Davis R.W."/>
        </authorList>
    </citation>
    <scope>NUCLEOTIDE SEQUENCE [LARGE SCALE GENOMIC DNA]</scope>
    <source>
        <strain>cv. Columbia</strain>
    </source>
</reference>
<reference key="2">
    <citation type="journal article" date="2017" name="Plant J.">
        <title>Araport11: a complete reannotation of the Arabidopsis thaliana reference genome.</title>
        <authorList>
            <person name="Cheng C.Y."/>
            <person name="Krishnakumar V."/>
            <person name="Chan A.P."/>
            <person name="Thibaud-Nissen F."/>
            <person name="Schobel S."/>
            <person name="Town C.D."/>
        </authorList>
    </citation>
    <scope>GENOME REANNOTATION</scope>
    <source>
        <strain>cv. Columbia</strain>
    </source>
</reference>
<reference key="3">
    <citation type="journal article" date="2003" name="Science">
        <title>Empirical analysis of transcriptional activity in the Arabidopsis genome.</title>
        <authorList>
            <person name="Yamada K."/>
            <person name="Lim J."/>
            <person name="Dale J.M."/>
            <person name="Chen H."/>
            <person name="Shinn P."/>
            <person name="Palm C.J."/>
            <person name="Southwick A.M."/>
            <person name="Wu H.C."/>
            <person name="Kim C.J."/>
            <person name="Nguyen M."/>
            <person name="Pham P.K."/>
            <person name="Cheuk R.F."/>
            <person name="Karlin-Newmann G."/>
            <person name="Liu S.X."/>
            <person name="Lam B."/>
            <person name="Sakano H."/>
            <person name="Wu T."/>
            <person name="Yu G."/>
            <person name="Miranda M."/>
            <person name="Quach H.L."/>
            <person name="Tripp M."/>
            <person name="Chang C.H."/>
            <person name="Lee J.M."/>
            <person name="Toriumi M.J."/>
            <person name="Chan M.M."/>
            <person name="Tang C.C."/>
            <person name="Onodera C.S."/>
            <person name="Deng J.M."/>
            <person name="Akiyama K."/>
            <person name="Ansari Y."/>
            <person name="Arakawa T."/>
            <person name="Banh J."/>
            <person name="Banno F."/>
            <person name="Bowser L."/>
            <person name="Brooks S.Y."/>
            <person name="Carninci P."/>
            <person name="Chao Q."/>
            <person name="Choy N."/>
            <person name="Enju A."/>
            <person name="Goldsmith A.D."/>
            <person name="Gurjal M."/>
            <person name="Hansen N.F."/>
            <person name="Hayashizaki Y."/>
            <person name="Johnson-Hopson C."/>
            <person name="Hsuan V.W."/>
            <person name="Iida K."/>
            <person name="Karnes M."/>
            <person name="Khan S."/>
            <person name="Koesema E."/>
            <person name="Ishida J."/>
            <person name="Jiang P.X."/>
            <person name="Jones T."/>
            <person name="Kawai J."/>
            <person name="Kamiya A."/>
            <person name="Meyers C."/>
            <person name="Nakajima M."/>
            <person name="Narusaka M."/>
            <person name="Seki M."/>
            <person name="Sakurai T."/>
            <person name="Satou M."/>
            <person name="Tamse R."/>
            <person name="Vaysberg M."/>
            <person name="Wallender E.K."/>
            <person name="Wong C."/>
            <person name="Yamamura Y."/>
            <person name="Yuan S."/>
            <person name="Shinozaki K."/>
            <person name="Davis R.W."/>
            <person name="Theologis A."/>
            <person name="Ecker J.R."/>
        </authorList>
    </citation>
    <scope>NUCLEOTIDE SEQUENCE [LARGE SCALE MRNA]</scope>
    <source>
        <strain>cv. Columbia</strain>
    </source>
</reference>
<reference key="4">
    <citation type="submission" date="2002-03" db="EMBL/GenBank/DDBJ databases">
        <title>Full-length cDNA from Arabidopsis thaliana.</title>
        <authorList>
            <person name="Brover V.V."/>
            <person name="Troukhan M.E."/>
            <person name="Alexandrov N.A."/>
            <person name="Lu Y.-P."/>
            <person name="Flavell R.B."/>
            <person name="Feldmann K.A."/>
        </authorList>
    </citation>
    <scope>NUCLEOTIDE SEQUENCE [LARGE SCALE MRNA]</scope>
</reference>
<organism>
    <name type="scientific">Arabidopsis thaliana</name>
    <name type="common">Mouse-ear cress</name>
    <dbReference type="NCBI Taxonomy" id="3702"/>
    <lineage>
        <taxon>Eukaryota</taxon>
        <taxon>Viridiplantae</taxon>
        <taxon>Streptophyta</taxon>
        <taxon>Embryophyta</taxon>
        <taxon>Tracheophyta</taxon>
        <taxon>Spermatophyta</taxon>
        <taxon>Magnoliopsida</taxon>
        <taxon>eudicotyledons</taxon>
        <taxon>Gunneridae</taxon>
        <taxon>Pentapetalae</taxon>
        <taxon>rosids</taxon>
        <taxon>malvids</taxon>
        <taxon>Brassicales</taxon>
        <taxon>Brassicaceae</taxon>
        <taxon>Camelineae</taxon>
        <taxon>Arabidopsis</taxon>
    </lineage>
</organism>